<evidence type="ECO:0000255" key="1">
    <source>
        <dbReference type="HAMAP-Rule" id="MF_00175"/>
    </source>
</evidence>
<evidence type="ECO:0000255" key="2">
    <source>
        <dbReference type="PROSITE-ProRule" id="PRU01250"/>
    </source>
</evidence>
<dbReference type="EMBL" id="AP006618">
    <property type="protein sequence ID" value="BAD56180.1"/>
    <property type="molecule type" value="Genomic_DNA"/>
</dbReference>
<dbReference type="RefSeq" id="WP_011207865.1">
    <property type="nucleotide sequence ID" value="NC_006361.1"/>
</dbReference>
<dbReference type="SMR" id="Q5Z061"/>
<dbReference type="STRING" id="247156.NFA_13350"/>
<dbReference type="GeneID" id="61132157"/>
<dbReference type="KEGG" id="nfa:NFA_13350"/>
<dbReference type="eggNOG" id="COG1219">
    <property type="taxonomic scope" value="Bacteria"/>
</dbReference>
<dbReference type="HOGENOM" id="CLU_014218_8_2_11"/>
<dbReference type="OrthoDB" id="9804062at2"/>
<dbReference type="Proteomes" id="UP000006820">
    <property type="component" value="Chromosome"/>
</dbReference>
<dbReference type="GO" id="GO:0009376">
    <property type="term" value="C:HslUV protease complex"/>
    <property type="evidence" value="ECO:0007669"/>
    <property type="project" value="TreeGrafter"/>
</dbReference>
<dbReference type="GO" id="GO:0005524">
    <property type="term" value="F:ATP binding"/>
    <property type="evidence" value="ECO:0007669"/>
    <property type="project" value="UniProtKB-UniRule"/>
</dbReference>
<dbReference type="GO" id="GO:0016887">
    <property type="term" value="F:ATP hydrolysis activity"/>
    <property type="evidence" value="ECO:0007669"/>
    <property type="project" value="InterPro"/>
</dbReference>
<dbReference type="GO" id="GO:0140662">
    <property type="term" value="F:ATP-dependent protein folding chaperone"/>
    <property type="evidence" value="ECO:0007669"/>
    <property type="project" value="InterPro"/>
</dbReference>
<dbReference type="GO" id="GO:0046983">
    <property type="term" value="F:protein dimerization activity"/>
    <property type="evidence" value="ECO:0007669"/>
    <property type="project" value="InterPro"/>
</dbReference>
<dbReference type="GO" id="GO:0051082">
    <property type="term" value="F:unfolded protein binding"/>
    <property type="evidence" value="ECO:0007669"/>
    <property type="project" value="UniProtKB-UniRule"/>
</dbReference>
<dbReference type="GO" id="GO:0008270">
    <property type="term" value="F:zinc ion binding"/>
    <property type="evidence" value="ECO:0007669"/>
    <property type="project" value="InterPro"/>
</dbReference>
<dbReference type="GO" id="GO:0051301">
    <property type="term" value="P:cell division"/>
    <property type="evidence" value="ECO:0007669"/>
    <property type="project" value="TreeGrafter"/>
</dbReference>
<dbReference type="GO" id="GO:0051603">
    <property type="term" value="P:proteolysis involved in protein catabolic process"/>
    <property type="evidence" value="ECO:0007669"/>
    <property type="project" value="TreeGrafter"/>
</dbReference>
<dbReference type="CDD" id="cd19497">
    <property type="entry name" value="RecA-like_ClpX"/>
    <property type="match status" value="1"/>
</dbReference>
<dbReference type="FunFam" id="1.10.8.60:FF:000002">
    <property type="entry name" value="ATP-dependent Clp protease ATP-binding subunit ClpX"/>
    <property type="match status" value="1"/>
</dbReference>
<dbReference type="FunFam" id="3.40.50.300:FF:000005">
    <property type="entry name" value="ATP-dependent Clp protease ATP-binding subunit ClpX"/>
    <property type="match status" value="1"/>
</dbReference>
<dbReference type="Gene3D" id="1.10.8.60">
    <property type="match status" value="1"/>
</dbReference>
<dbReference type="Gene3D" id="6.20.220.10">
    <property type="entry name" value="ClpX chaperone, C4-type zinc finger domain"/>
    <property type="match status" value="1"/>
</dbReference>
<dbReference type="Gene3D" id="3.40.50.300">
    <property type="entry name" value="P-loop containing nucleotide triphosphate hydrolases"/>
    <property type="match status" value="1"/>
</dbReference>
<dbReference type="HAMAP" id="MF_00175">
    <property type="entry name" value="ClpX"/>
    <property type="match status" value="1"/>
</dbReference>
<dbReference type="InterPro" id="IPR003593">
    <property type="entry name" value="AAA+_ATPase"/>
</dbReference>
<dbReference type="InterPro" id="IPR050052">
    <property type="entry name" value="ATP-dep_Clp_protease_ClpX"/>
</dbReference>
<dbReference type="InterPro" id="IPR003959">
    <property type="entry name" value="ATPase_AAA_core"/>
</dbReference>
<dbReference type="InterPro" id="IPR019489">
    <property type="entry name" value="Clp_ATPase_C"/>
</dbReference>
<dbReference type="InterPro" id="IPR004487">
    <property type="entry name" value="Clp_protease_ATP-bd_su_ClpX"/>
</dbReference>
<dbReference type="InterPro" id="IPR046425">
    <property type="entry name" value="ClpX_bact"/>
</dbReference>
<dbReference type="InterPro" id="IPR027417">
    <property type="entry name" value="P-loop_NTPase"/>
</dbReference>
<dbReference type="InterPro" id="IPR010603">
    <property type="entry name" value="Znf_CppX_C4"/>
</dbReference>
<dbReference type="InterPro" id="IPR038366">
    <property type="entry name" value="Znf_CppX_C4_sf"/>
</dbReference>
<dbReference type="NCBIfam" id="TIGR00382">
    <property type="entry name" value="clpX"/>
    <property type="match status" value="1"/>
</dbReference>
<dbReference type="NCBIfam" id="NF003745">
    <property type="entry name" value="PRK05342.1"/>
    <property type="match status" value="1"/>
</dbReference>
<dbReference type="PANTHER" id="PTHR48102:SF7">
    <property type="entry name" value="ATP-DEPENDENT CLP PROTEASE ATP-BINDING SUBUNIT CLPX-LIKE, MITOCHONDRIAL"/>
    <property type="match status" value="1"/>
</dbReference>
<dbReference type="PANTHER" id="PTHR48102">
    <property type="entry name" value="ATP-DEPENDENT CLP PROTEASE ATP-BINDING SUBUNIT CLPX-LIKE, MITOCHONDRIAL-RELATED"/>
    <property type="match status" value="1"/>
</dbReference>
<dbReference type="Pfam" id="PF07724">
    <property type="entry name" value="AAA_2"/>
    <property type="match status" value="1"/>
</dbReference>
<dbReference type="Pfam" id="PF10431">
    <property type="entry name" value="ClpB_D2-small"/>
    <property type="match status" value="1"/>
</dbReference>
<dbReference type="Pfam" id="PF06689">
    <property type="entry name" value="zf-C4_ClpX"/>
    <property type="match status" value="1"/>
</dbReference>
<dbReference type="SMART" id="SM00382">
    <property type="entry name" value="AAA"/>
    <property type="match status" value="1"/>
</dbReference>
<dbReference type="SMART" id="SM01086">
    <property type="entry name" value="ClpB_D2-small"/>
    <property type="match status" value="1"/>
</dbReference>
<dbReference type="SMART" id="SM00994">
    <property type="entry name" value="zf-C4_ClpX"/>
    <property type="match status" value="1"/>
</dbReference>
<dbReference type="SUPFAM" id="SSF57716">
    <property type="entry name" value="Glucocorticoid receptor-like (DNA-binding domain)"/>
    <property type="match status" value="1"/>
</dbReference>
<dbReference type="SUPFAM" id="SSF52540">
    <property type="entry name" value="P-loop containing nucleoside triphosphate hydrolases"/>
    <property type="match status" value="1"/>
</dbReference>
<dbReference type="PROSITE" id="PS51902">
    <property type="entry name" value="CLPX_ZB"/>
    <property type="match status" value="1"/>
</dbReference>
<comment type="function">
    <text evidence="1">ATP-dependent specificity component of the Clp protease. It directs the protease to specific substrates. Can perform chaperone functions in the absence of ClpP.</text>
</comment>
<comment type="subunit">
    <text evidence="1">Component of the ClpX-ClpP complex. Forms a hexameric ring that, in the presence of ATP, binds to fourteen ClpP subunits assembled into a disk-like structure with a central cavity, resembling the structure of eukaryotic proteasomes.</text>
</comment>
<comment type="similarity">
    <text evidence="1">Belongs to the ClpX chaperone family.</text>
</comment>
<sequence length="426" mass="46674">MARIGDGGDLLKCSFCGKSQKQVKKLIAGPGVYICDECIDLCNEIIEEELAESSEVKLDELPKPAEIREFLENYVIGQDAAKRTLAVAVYNHYKRIQAGDKGRDSRGETVELTKSNILMLGPTGCGKTYLAQTLAKMLNVPFAIADATALTEAGYVGEDVENILLKLIQAADYDVKRAETGIIYIDEVDKIARKSENPSITRDVSGEGVQQALLKILEGTQASVPPQGGRKHPHQEFIQIDTTNVLFIVAGAFAGLEKIISDRTGHRGIGFGAEVRSKAEIDTTDHFADVMPEDLIKFGLIPEFIGRLPVVASVTNLDKESLVKILSEPKNALVKQYIRLFEMDGVELEFTQDALEAIADQAILRGTGARGLRAIMEEVLLPVMYDIPSRDDVARVVVTADTVNDNVLPTIVPRKPQRPERRDKSA</sequence>
<keyword id="KW-0067">ATP-binding</keyword>
<keyword id="KW-0143">Chaperone</keyword>
<keyword id="KW-0479">Metal-binding</keyword>
<keyword id="KW-0547">Nucleotide-binding</keyword>
<keyword id="KW-1185">Reference proteome</keyword>
<keyword id="KW-0862">Zinc</keyword>
<organism>
    <name type="scientific">Nocardia farcinica (strain IFM 10152)</name>
    <dbReference type="NCBI Taxonomy" id="247156"/>
    <lineage>
        <taxon>Bacteria</taxon>
        <taxon>Bacillati</taxon>
        <taxon>Actinomycetota</taxon>
        <taxon>Actinomycetes</taxon>
        <taxon>Mycobacteriales</taxon>
        <taxon>Nocardiaceae</taxon>
        <taxon>Nocardia</taxon>
    </lineage>
</organism>
<feature type="chain" id="PRO_0000160393" description="ATP-dependent Clp protease ATP-binding subunit ClpX">
    <location>
        <begin position="1"/>
        <end position="426"/>
    </location>
</feature>
<feature type="domain" description="ClpX-type ZB" evidence="2">
    <location>
        <begin position="1"/>
        <end position="54"/>
    </location>
</feature>
<feature type="binding site" evidence="2">
    <location>
        <position position="13"/>
    </location>
    <ligand>
        <name>Zn(2+)</name>
        <dbReference type="ChEBI" id="CHEBI:29105"/>
    </ligand>
</feature>
<feature type="binding site" evidence="2">
    <location>
        <position position="16"/>
    </location>
    <ligand>
        <name>Zn(2+)</name>
        <dbReference type="ChEBI" id="CHEBI:29105"/>
    </ligand>
</feature>
<feature type="binding site" evidence="2">
    <location>
        <position position="35"/>
    </location>
    <ligand>
        <name>Zn(2+)</name>
        <dbReference type="ChEBI" id="CHEBI:29105"/>
    </ligand>
</feature>
<feature type="binding site" evidence="2">
    <location>
        <position position="38"/>
    </location>
    <ligand>
        <name>Zn(2+)</name>
        <dbReference type="ChEBI" id="CHEBI:29105"/>
    </ligand>
</feature>
<feature type="binding site" evidence="1">
    <location>
        <begin position="122"/>
        <end position="129"/>
    </location>
    <ligand>
        <name>ATP</name>
        <dbReference type="ChEBI" id="CHEBI:30616"/>
    </ligand>
</feature>
<reference key="1">
    <citation type="journal article" date="2004" name="Proc. Natl. Acad. Sci. U.S.A.">
        <title>The complete genomic sequence of Nocardia farcinica IFM 10152.</title>
        <authorList>
            <person name="Ishikawa J."/>
            <person name="Yamashita A."/>
            <person name="Mikami Y."/>
            <person name="Hoshino Y."/>
            <person name="Kurita H."/>
            <person name="Hotta K."/>
            <person name="Shiba T."/>
            <person name="Hattori M."/>
        </authorList>
    </citation>
    <scope>NUCLEOTIDE SEQUENCE [LARGE SCALE GENOMIC DNA]</scope>
    <source>
        <strain>IFM 10152</strain>
    </source>
</reference>
<gene>
    <name evidence="1" type="primary">clpX</name>
    <name type="ordered locus">NFA_13350</name>
</gene>
<accession>Q5Z061</accession>
<name>CLPX_NOCFA</name>
<protein>
    <recommendedName>
        <fullName evidence="1">ATP-dependent Clp protease ATP-binding subunit ClpX</fullName>
    </recommendedName>
</protein>
<proteinExistence type="inferred from homology"/>